<accession>O30092</accession>
<name>Y145_ARCFU</name>
<gene>
    <name type="ordered locus">AF_0145</name>
</gene>
<dbReference type="EMBL" id="AE000782">
    <property type="protein sequence ID" value="AAB91090.1"/>
    <property type="molecule type" value="Genomic_DNA"/>
</dbReference>
<dbReference type="PIR" id="A69268">
    <property type="entry name" value="A69268"/>
</dbReference>
<dbReference type="PaxDb" id="224325-AF_0145"/>
<dbReference type="EnsemblBacteria" id="AAB91090">
    <property type="protein sequence ID" value="AAB91090"/>
    <property type="gene ID" value="AF_0145"/>
</dbReference>
<dbReference type="KEGG" id="afu:AF_0145"/>
<dbReference type="HOGENOM" id="CLU_2216907_0_0_2"/>
<dbReference type="Proteomes" id="UP000002199">
    <property type="component" value="Chromosome"/>
</dbReference>
<dbReference type="GO" id="GO:0005886">
    <property type="term" value="C:plasma membrane"/>
    <property type="evidence" value="ECO:0007669"/>
    <property type="project" value="UniProtKB-SubCell"/>
</dbReference>
<organism>
    <name type="scientific">Archaeoglobus fulgidus (strain ATCC 49558 / DSM 4304 / JCM 9628 / NBRC 100126 / VC-16)</name>
    <dbReference type="NCBI Taxonomy" id="224325"/>
    <lineage>
        <taxon>Archaea</taxon>
        <taxon>Methanobacteriati</taxon>
        <taxon>Methanobacteriota</taxon>
        <taxon>Archaeoglobi</taxon>
        <taxon>Archaeoglobales</taxon>
        <taxon>Archaeoglobaceae</taxon>
        <taxon>Archaeoglobus</taxon>
    </lineage>
</organism>
<proteinExistence type="predicted"/>
<reference key="1">
    <citation type="journal article" date="1997" name="Nature">
        <title>The complete genome sequence of the hyperthermophilic, sulphate-reducing archaeon Archaeoglobus fulgidus.</title>
        <authorList>
            <person name="Klenk H.-P."/>
            <person name="Clayton R.A."/>
            <person name="Tomb J.-F."/>
            <person name="White O."/>
            <person name="Nelson K.E."/>
            <person name="Ketchum K.A."/>
            <person name="Dodson R.J."/>
            <person name="Gwinn M.L."/>
            <person name="Hickey E.K."/>
            <person name="Peterson J.D."/>
            <person name="Richardson D.L."/>
            <person name="Kerlavage A.R."/>
            <person name="Graham D.E."/>
            <person name="Kyrpides N.C."/>
            <person name="Fleischmann R.D."/>
            <person name="Quackenbush J."/>
            <person name="Lee N.H."/>
            <person name="Sutton G.G."/>
            <person name="Gill S.R."/>
            <person name="Kirkness E.F."/>
            <person name="Dougherty B.A."/>
            <person name="McKenney K."/>
            <person name="Adams M.D."/>
            <person name="Loftus B.J."/>
            <person name="Peterson S.N."/>
            <person name="Reich C.I."/>
            <person name="McNeil L.K."/>
            <person name="Badger J.H."/>
            <person name="Glodek A."/>
            <person name="Zhou L."/>
            <person name="Overbeek R."/>
            <person name="Gocayne J.D."/>
            <person name="Weidman J.F."/>
            <person name="McDonald L.A."/>
            <person name="Utterback T.R."/>
            <person name="Cotton M.D."/>
            <person name="Spriggs T."/>
            <person name="Artiach P."/>
            <person name="Kaine B.P."/>
            <person name="Sykes S.M."/>
            <person name="Sadow P.W."/>
            <person name="D'Andrea K.P."/>
            <person name="Bowman C."/>
            <person name="Fujii C."/>
            <person name="Garland S.A."/>
            <person name="Mason T.M."/>
            <person name="Olsen G.J."/>
            <person name="Fraser C.M."/>
            <person name="Smith H.O."/>
            <person name="Woese C.R."/>
            <person name="Venter J.C."/>
        </authorList>
    </citation>
    <scope>NUCLEOTIDE SEQUENCE [LARGE SCALE GENOMIC DNA]</scope>
    <source>
        <strain>ATCC 49558 / DSM 4304 / JCM 9628 / NBRC 100126 / VC-16</strain>
    </source>
</reference>
<protein>
    <recommendedName>
        <fullName>Uncharacterized protein AF_0145</fullName>
    </recommendedName>
</protein>
<sequence length="112" mass="12539">MCRCRCMAMMSFVAIVTPLTMLTGLIDWKYRYDMRKVPIIQRKVITGIVGYVFVVVYVVLHSLTDYSLAALAMALVFFAITGEYGGKLVHGARTLLCLKNLRKGSSQKSNPN</sequence>
<feature type="chain" id="PRO_0000127836" description="Uncharacterized protein AF_0145">
    <location>
        <begin position="1"/>
        <end position="112"/>
    </location>
</feature>
<feature type="transmembrane region" description="Helical" evidence="1">
    <location>
        <begin position="44"/>
        <end position="63"/>
    </location>
</feature>
<feature type="transmembrane region" description="Helical" evidence="1">
    <location>
        <begin position="68"/>
        <end position="90"/>
    </location>
</feature>
<evidence type="ECO:0000255" key="1"/>
<evidence type="ECO:0000305" key="2"/>
<comment type="subcellular location">
    <subcellularLocation>
        <location evidence="2">Cell membrane</location>
        <topology evidence="2">Multi-pass membrane protein</topology>
    </subcellularLocation>
</comment>
<keyword id="KW-1003">Cell membrane</keyword>
<keyword id="KW-0472">Membrane</keyword>
<keyword id="KW-1185">Reference proteome</keyword>
<keyword id="KW-0812">Transmembrane</keyword>
<keyword id="KW-1133">Transmembrane helix</keyword>